<reference key="1">
    <citation type="submission" date="2009-01" db="EMBL/GenBank/DDBJ databases">
        <title>Complete sequence of Desulfovibrio desulfuricans subsp. desulfuricans str. ATCC 27774.</title>
        <authorList>
            <consortium name="US DOE Joint Genome Institute"/>
            <person name="Lucas S."/>
            <person name="Copeland A."/>
            <person name="Lapidus A."/>
            <person name="Glavina del Rio T."/>
            <person name="Tice H."/>
            <person name="Bruce D."/>
            <person name="Goodwin L."/>
            <person name="Pitluck S."/>
            <person name="Sims D."/>
            <person name="Lu M."/>
            <person name="Kiss H."/>
            <person name="Meineke L."/>
            <person name="Brettin T."/>
            <person name="Detter J.C."/>
            <person name="Han C."/>
            <person name="Larimer F."/>
            <person name="Land M."/>
            <person name="Hauser L."/>
            <person name="Kyrpides N."/>
            <person name="Ovchinnikova G."/>
            <person name="Hazen T.C."/>
        </authorList>
    </citation>
    <scope>NUCLEOTIDE SEQUENCE [LARGE SCALE GENOMIC DNA]</scope>
    <source>
        <strain>ATCC 27774 / DSM 6949 / MB</strain>
    </source>
</reference>
<protein>
    <recommendedName>
        <fullName evidence="1">Probable cytosol aminopeptidase</fullName>
        <ecNumber evidence="1">3.4.11.1</ecNumber>
    </recommendedName>
    <alternativeName>
        <fullName evidence="1">Leucine aminopeptidase</fullName>
        <shortName evidence="1">LAP</shortName>
        <ecNumber evidence="1">3.4.11.10</ecNumber>
    </alternativeName>
    <alternativeName>
        <fullName evidence="1">Leucyl aminopeptidase</fullName>
    </alternativeName>
</protein>
<dbReference type="EC" id="3.4.11.1" evidence="1"/>
<dbReference type="EC" id="3.4.11.10" evidence="1"/>
<dbReference type="EMBL" id="CP001358">
    <property type="protein sequence ID" value="ACL50102.1"/>
    <property type="molecule type" value="Genomic_DNA"/>
</dbReference>
<dbReference type="SMR" id="B8J457"/>
<dbReference type="STRING" id="525146.Ddes_2206"/>
<dbReference type="KEGG" id="dds:Ddes_2206"/>
<dbReference type="eggNOG" id="COG0260">
    <property type="taxonomic scope" value="Bacteria"/>
</dbReference>
<dbReference type="HOGENOM" id="CLU_013734_2_2_7"/>
<dbReference type="GO" id="GO:0005737">
    <property type="term" value="C:cytoplasm"/>
    <property type="evidence" value="ECO:0007669"/>
    <property type="project" value="UniProtKB-SubCell"/>
</dbReference>
<dbReference type="GO" id="GO:0030145">
    <property type="term" value="F:manganese ion binding"/>
    <property type="evidence" value="ECO:0007669"/>
    <property type="project" value="UniProtKB-UniRule"/>
</dbReference>
<dbReference type="GO" id="GO:0070006">
    <property type="term" value="F:metalloaminopeptidase activity"/>
    <property type="evidence" value="ECO:0007669"/>
    <property type="project" value="InterPro"/>
</dbReference>
<dbReference type="GO" id="GO:0006508">
    <property type="term" value="P:proteolysis"/>
    <property type="evidence" value="ECO:0007669"/>
    <property type="project" value="UniProtKB-KW"/>
</dbReference>
<dbReference type="CDD" id="cd00433">
    <property type="entry name" value="Peptidase_M17"/>
    <property type="match status" value="1"/>
</dbReference>
<dbReference type="Gene3D" id="3.40.220.10">
    <property type="entry name" value="Leucine Aminopeptidase, subunit E, domain 1"/>
    <property type="match status" value="1"/>
</dbReference>
<dbReference type="Gene3D" id="3.40.630.10">
    <property type="entry name" value="Zn peptidases"/>
    <property type="match status" value="1"/>
</dbReference>
<dbReference type="HAMAP" id="MF_00181">
    <property type="entry name" value="Cytosol_peptidase_M17"/>
    <property type="match status" value="1"/>
</dbReference>
<dbReference type="InterPro" id="IPR011356">
    <property type="entry name" value="Leucine_aapep/pepB"/>
</dbReference>
<dbReference type="InterPro" id="IPR043472">
    <property type="entry name" value="Macro_dom-like"/>
</dbReference>
<dbReference type="InterPro" id="IPR000819">
    <property type="entry name" value="Peptidase_M17_C"/>
</dbReference>
<dbReference type="InterPro" id="IPR023042">
    <property type="entry name" value="Peptidase_M17_leu_NH2_pept"/>
</dbReference>
<dbReference type="InterPro" id="IPR008283">
    <property type="entry name" value="Peptidase_M17_N"/>
</dbReference>
<dbReference type="NCBIfam" id="NF002073">
    <property type="entry name" value="PRK00913.1-2"/>
    <property type="match status" value="1"/>
</dbReference>
<dbReference type="NCBIfam" id="NF002074">
    <property type="entry name" value="PRK00913.1-4"/>
    <property type="match status" value="1"/>
</dbReference>
<dbReference type="PANTHER" id="PTHR11963:SF23">
    <property type="entry name" value="CYTOSOL AMINOPEPTIDASE"/>
    <property type="match status" value="1"/>
</dbReference>
<dbReference type="PANTHER" id="PTHR11963">
    <property type="entry name" value="LEUCINE AMINOPEPTIDASE-RELATED"/>
    <property type="match status" value="1"/>
</dbReference>
<dbReference type="Pfam" id="PF00883">
    <property type="entry name" value="Peptidase_M17"/>
    <property type="match status" value="1"/>
</dbReference>
<dbReference type="Pfam" id="PF02789">
    <property type="entry name" value="Peptidase_M17_N"/>
    <property type="match status" value="1"/>
</dbReference>
<dbReference type="PRINTS" id="PR00481">
    <property type="entry name" value="LAMNOPPTDASE"/>
</dbReference>
<dbReference type="SUPFAM" id="SSF52949">
    <property type="entry name" value="Macro domain-like"/>
    <property type="match status" value="1"/>
</dbReference>
<dbReference type="SUPFAM" id="SSF53187">
    <property type="entry name" value="Zn-dependent exopeptidases"/>
    <property type="match status" value="1"/>
</dbReference>
<dbReference type="PROSITE" id="PS00631">
    <property type="entry name" value="CYTOSOL_AP"/>
    <property type="match status" value="1"/>
</dbReference>
<proteinExistence type="inferred from homology"/>
<organism>
    <name type="scientific">Desulfovibrio desulfuricans (strain ATCC 27774 / DSM 6949 / MB)</name>
    <dbReference type="NCBI Taxonomy" id="525146"/>
    <lineage>
        <taxon>Bacteria</taxon>
        <taxon>Pseudomonadati</taxon>
        <taxon>Thermodesulfobacteriota</taxon>
        <taxon>Desulfovibrionia</taxon>
        <taxon>Desulfovibrionales</taxon>
        <taxon>Desulfovibrionaceae</taxon>
        <taxon>Desulfovibrio</taxon>
    </lineage>
</organism>
<keyword id="KW-0031">Aminopeptidase</keyword>
<keyword id="KW-0963">Cytoplasm</keyword>
<keyword id="KW-0378">Hydrolase</keyword>
<keyword id="KW-0464">Manganese</keyword>
<keyword id="KW-0479">Metal-binding</keyword>
<keyword id="KW-0645">Protease</keyword>
<sequence length="501" mass="53370">MDIRFQNLGPEHWKGEIMLAPVCQDEVLTEICPQMDKAAPWLAIAPALRDFKGKTGELALMHGHPELAVPRVLAVGLGPREKVDTAGIRKAVAAAVQLCRQKGFGSILLPEPALARLPGGRERLVEECVCASLLALYRFTALKKAEKDEPAEPQWLALGFDGQEVPDASHAAARKGENAAWAVMLARDLASTPPNLLYPEKLAERARELAREKGFACTVLDEHELEKESMGCLLAVGQGSGRPPRLVILEHAPEGHEQEKPLILVGKGITFDTGGISLKPAANMHQMKADMTGAATVLATLAALAQEDAPRRVIGLLACAENMPGGRAMRPGDVVRAANGDSVEIQNTDAEGRLALCDALAYAQKTWTPAALVDIATLTGACAVALGTQIAGLFSDDADLAERIRAAGGACGEEYWPLPLWKPYAEQLKSDVADICHMGPREGGAINAALFLQHFIQEGVRWAHLDIAGVDWVSKPTPLCPAGPSAFGARTLLELARGGVL</sequence>
<feature type="chain" id="PRO_1000192710" description="Probable cytosol aminopeptidase">
    <location>
        <begin position="1"/>
        <end position="501"/>
    </location>
</feature>
<feature type="active site" evidence="1">
    <location>
        <position position="279"/>
    </location>
</feature>
<feature type="active site" evidence="1">
    <location>
        <position position="353"/>
    </location>
</feature>
<feature type="binding site" evidence="1">
    <location>
        <position position="267"/>
    </location>
    <ligand>
        <name>Mn(2+)</name>
        <dbReference type="ChEBI" id="CHEBI:29035"/>
        <label>2</label>
    </ligand>
</feature>
<feature type="binding site" evidence="1">
    <location>
        <position position="272"/>
    </location>
    <ligand>
        <name>Mn(2+)</name>
        <dbReference type="ChEBI" id="CHEBI:29035"/>
        <label>1</label>
    </ligand>
</feature>
<feature type="binding site" evidence="1">
    <location>
        <position position="272"/>
    </location>
    <ligand>
        <name>Mn(2+)</name>
        <dbReference type="ChEBI" id="CHEBI:29035"/>
        <label>2</label>
    </ligand>
</feature>
<feature type="binding site" evidence="1">
    <location>
        <position position="290"/>
    </location>
    <ligand>
        <name>Mn(2+)</name>
        <dbReference type="ChEBI" id="CHEBI:29035"/>
        <label>2</label>
    </ligand>
</feature>
<feature type="binding site" evidence="1">
    <location>
        <position position="349"/>
    </location>
    <ligand>
        <name>Mn(2+)</name>
        <dbReference type="ChEBI" id="CHEBI:29035"/>
        <label>1</label>
    </ligand>
</feature>
<feature type="binding site" evidence="1">
    <location>
        <position position="351"/>
    </location>
    <ligand>
        <name>Mn(2+)</name>
        <dbReference type="ChEBI" id="CHEBI:29035"/>
        <label>1</label>
    </ligand>
</feature>
<feature type="binding site" evidence="1">
    <location>
        <position position="351"/>
    </location>
    <ligand>
        <name>Mn(2+)</name>
        <dbReference type="ChEBI" id="CHEBI:29035"/>
        <label>2</label>
    </ligand>
</feature>
<gene>
    <name evidence="1" type="primary">pepA</name>
    <name type="ordered locus">Ddes_2206</name>
</gene>
<comment type="function">
    <text evidence="1">Presumably involved in the processing and regular turnover of intracellular proteins. Catalyzes the removal of unsubstituted N-terminal amino acids from various peptides.</text>
</comment>
<comment type="catalytic activity">
    <reaction evidence="1">
        <text>Release of an N-terminal amino acid, Xaa-|-Yaa-, in which Xaa is preferably Leu, but may be other amino acids including Pro although not Arg or Lys, and Yaa may be Pro. Amino acid amides and methyl esters are also readily hydrolyzed, but rates on arylamides are exceedingly low.</text>
        <dbReference type="EC" id="3.4.11.1"/>
    </reaction>
</comment>
<comment type="catalytic activity">
    <reaction evidence="1">
        <text>Release of an N-terminal amino acid, preferentially leucine, but not glutamic or aspartic acids.</text>
        <dbReference type="EC" id="3.4.11.10"/>
    </reaction>
</comment>
<comment type="cofactor">
    <cofactor evidence="1">
        <name>Mn(2+)</name>
        <dbReference type="ChEBI" id="CHEBI:29035"/>
    </cofactor>
    <text evidence="1">Binds 2 manganese ions per subunit.</text>
</comment>
<comment type="subcellular location">
    <subcellularLocation>
        <location evidence="1">Cytoplasm</location>
    </subcellularLocation>
</comment>
<comment type="similarity">
    <text evidence="1">Belongs to the peptidase M17 family.</text>
</comment>
<name>AMPA_DESDA</name>
<accession>B8J457</accession>
<evidence type="ECO:0000255" key="1">
    <source>
        <dbReference type="HAMAP-Rule" id="MF_00181"/>
    </source>
</evidence>